<dbReference type="EMBL" id="DQ220746">
    <property type="protein sequence ID" value="ABB81885.1"/>
    <property type="molecule type" value="mRNA"/>
</dbReference>
<dbReference type="PDB" id="1ZAN">
    <property type="method" value="X-ray"/>
    <property type="resolution" value="1.70 A"/>
    <property type="chains" value="H=2-220"/>
</dbReference>
<dbReference type="PDB" id="2ADF">
    <property type="method" value="X-ray"/>
    <property type="resolution" value="1.90 A"/>
    <property type="chains" value="H=108-220"/>
</dbReference>
<dbReference type="PDB" id="2AEP">
    <property type="method" value="X-ray"/>
    <property type="resolution" value="2.10 A"/>
    <property type="chains" value="H=1-217"/>
</dbReference>
<dbReference type="PDB" id="2AEQ">
    <property type="method" value="X-ray"/>
    <property type="resolution" value="3.00 A"/>
    <property type="chains" value="H=1-217"/>
</dbReference>
<dbReference type="PDB" id="2G2R">
    <property type="method" value="X-ray"/>
    <property type="resolution" value="2.75 A"/>
    <property type="chains" value="B/H=109-221"/>
</dbReference>
<dbReference type="PDB" id="2G5B">
    <property type="method" value="X-ray"/>
    <property type="resolution" value="2.30 A"/>
    <property type="chains" value="F=1-219"/>
</dbReference>
<dbReference type="PDB" id="3BKC">
    <property type="method" value="X-ray"/>
    <property type="resolution" value="1.90 A"/>
    <property type="chains" value="H=92-227"/>
</dbReference>
<dbReference type="PDB" id="3BKJ">
    <property type="method" value="X-ray"/>
    <property type="resolution" value="1.59 A"/>
    <property type="chains" value="H=92-220"/>
</dbReference>
<dbReference type="PDB" id="3BKM">
    <property type="method" value="X-ray"/>
    <property type="resolution" value="1.60 A"/>
    <property type="chains" value="H=92-220"/>
</dbReference>
<dbReference type="PDB" id="4HDI">
    <property type="method" value="X-ray"/>
    <property type="resolution" value="2.45 A"/>
    <property type="chains" value="B/H=2-220"/>
</dbReference>
<dbReference type="PDBsum" id="1ZAN"/>
<dbReference type="PDBsum" id="2ADF"/>
<dbReference type="PDBsum" id="2AEP"/>
<dbReference type="PDBsum" id="2AEQ"/>
<dbReference type="PDBsum" id="2G2R"/>
<dbReference type="PDBsum" id="2G5B"/>
<dbReference type="PDBsum" id="3BKC"/>
<dbReference type="PDBsum" id="3BKJ"/>
<dbReference type="PDBsum" id="3BKM"/>
<dbReference type="PDBsum" id="4HDI"/>
<dbReference type="SMR" id="P84751"/>
<dbReference type="FunCoup" id="P84751">
    <property type="interactions" value="236"/>
</dbReference>
<dbReference type="jPOST" id="P84751"/>
<dbReference type="PeptideAtlas" id="P84751"/>
<dbReference type="InParanoid" id="P84751"/>
<dbReference type="EvolutionaryTrace" id="P84751"/>
<dbReference type="Proteomes" id="UP000000589">
    <property type="component" value="Unplaced"/>
</dbReference>
<dbReference type="RNAct" id="P84751">
    <property type="molecule type" value="protein"/>
</dbReference>
<dbReference type="GO" id="GO:0005576">
    <property type="term" value="C:extracellular region"/>
    <property type="evidence" value="ECO:0007669"/>
    <property type="project" value="UniProtKB-SubCell"/>
</dbReference>
<dbReference type="GO" id="GO:0019814">
    <property type="term" value="C:immunoglobulin complex"/>
    <property type="evidence" value="ECO:0007669"/>
    <property type="project" value="UniProtKB-KW"/>
</dbReference>
<dbReference type="GO" id="GO:0003823">
    <property type="term" value="F:antigen binding"/>
    <property type="evidence" value="ECO:0000318"/>
    <property type="project" value="GO_Central"/>
</dbReference>
<dbReference type="GO" id="GO:0016064">
    <property type="term" value="P:immunoglobulin mediated immune response"/>
    <property type="evidence" value="ECO:0000318"/>
    <property type="project" value="GO_Central"/>
</dbReference>
<dbReference type="CDD" id="cd21817">
    <property type="entry name" value="IgC1_CH1_IgEG"/>
    <property type="match status" value="1"/>
</dbReference>
<dbReference type="CDD" id="cd04981">
    <property type="entry name" value="IgV_H"/>
    <property type="match status" value="1"/>
</dbReference>
<dbReference type="FunFam" id="2.60.40.10:FF:001739">
    <property type="entry name" value="Ig gamma-2A chain C region"/>
    <property type="match status" value="1"/>
</dbReference>
<dbReference type="FunFam" id="2.60.40.10:FF:001372">
    <property type="entry name" value="Ig heavy chain V region M603"/>
    <property type="match status" value="1"/>
</dbReference>
<dbReference type="Gene3D" id="2.60.40.10">
    <property type="entry name" value="Immunoglobulins"/>
    <property type="match status" value="2"/>
</dbReference>
<dbReference type="InterPro" id="IPR007110">
    <property type="entry name" value="Ig-like_dom"/>
</dbReference>
<dbReference type="InterPro" id="IPR036179">
    <property type="entry name" value="Ig-like_dom_sf"/>
</dbReference>
<dbReference type="InterPro" id="IPR013783">
    <property type="entry name" value="Ig-like_fold"/>
</dbReference>
<dbReference type="InterPro" id="IPR003597">
    <property type="entry name" value="Ig_C1-set"/>
</dbReference>
<dbReference type="InterPro" id="IPR003599">
    <property type="entry name" value="Ig_sub"/>
</dbReference>
<dbReference type="InterPro" id="IPR013106">
    <property type="entry name" value="Ig_V-set"/>
</dbReference>
<dbReference type="InterPro" id="IPR050199">
    <property type="entry name" value="IgHV"/>
</dbReference>
<dbReference type="PANTHER" id="PTHR23266">
    <property type="entry name" value="IMMUNOGLOBULIN HEAVY CHAIN"/>
    <property type="match status" value="1"/>
</dbReference>
<dbReference type="Pfam" id="PF07654">
    <property type="entry name" value="C1-set"/>
    <property type="match status" value="1"/>
</dbReference>
<dbReference type="Pfam" id="PF07686">
    <property type="entry name" value="V-set"/>
    <property type="match status" value="1"/>
</dbReference>
<dbReference type="SMART" id="SM00409">
    <property type="entry name" value="IG"/>
    <property type="match status" value="1"/>
</dbReference>
<dbReference type="SMART" id="SM00407">
    <property type="entry name" value="IGc1"/>
    <property type="match status" value="1"/>
</dbReference>
<dbReference type="SMART" id="SM00406">
    <property type="entry name" value="IGv"/>
    <property type="match status" value="1"/>
</dbReference>
<dbReference type="SUPFAM" id="SSF48726">
    <property type="entry name" value="Immunoglobulin"/>
    <property type="match status" value="2"/>
</dbReference>
<dbReference type="PROSITE" id="PS50835">
    <property type="entry name" value="IG_LIKE"/>
    <property type="match status" value="2"/>
</dbReference>
<feature type="chain" id="PRO_0000059901" description="Ig heavy chain Mem5">
    <location>
        <begin position="1"/>
        <end position="237" status="greater than"/>
    </location>
</feature>
<feature type="domain" description="Ig-like 1" evidence="3">
    <location>
        <begin position="1"/>
        <end position="119"/>
    </location>
</feature>
<feature type="domain" description="Ig-like 2" evidence="3">
    <location>
        <begin position="126"/>
        <end position="218"/>
    </location>
</feature>
<feature type="region of interest" description="D segment" evidence="1">
    <location>
        <begin position="101"/>
        <end position="105"/>
    </location>
</feature>
<feature type="region of interest" description="JH2 segment" evidence="6">
    <location>
        <begin position="106"/>
        <end position="120"/>
    </location>
</feature>
<feature type="disulfide bond" evidence="1 4">
    <location>
        <begin position="22"/>
        <end position="98"/>
    </location>
</feature>
<feature type="disulfide bond" description="Interchain (with a light chain)" evidence="2 4">
    <location>
        <position position="135"/>
    </location>
</feature>
<feature type="disulfide bond" evidence="2 4">
    <location>
        <begin position="147"/>
        <end position="202"/>
    </location>
</feature>
<feature type="disulfide bond" description="Interchain (with a heavy chain)" evidence="2 4">
    <location>
        <position position="227"/>
    </location>
</feature>
<feature type="disulfide bond" description="Interchain (with a heavy chain)" evidence="2 4">
    <location>
        <position position="230"/>
    </location>
</feature>
<feature type="disulfide bond" description="Interchain (with a heavy chain)" evidence="2 4">
    <location>
        <position position="232"/>
    </location>
</feature>
<feature type="non-terminal residue" evidence="8">
    <location>
        <position position="237"/>
    </location>
</feature>
<feature type="strand" evidence="12">
    <location>
        <begin position="3"/>
        <end position="7"/>
    </location>
</feature>
<feature type="strand" evidence="12">
    <location>
        <begin position="10"/>
        <end position="12"/>
    </location>
</feature>
<feature type="strand" evidence="12">
    <location>
        <begin position="18"/>
        <end position="27"/>
    </location>
</feature>
<feature type="helix" evidence="9">
    <location>
        <begin position="29"/>
        <end position="31"/>
    </location>
</feature>
<feature type="strand" evidence="12">
    <location>
        <begin position="33"/>
        <end position="40"/>
    </location>
</feature>
<feature type="turn" evidence="11">
    <location>
        <begin position="41"/>
        <end position="43"/>
    </location>
</feature>
<feature type="strand" evidence="12">
    <location>
        <begin position="46"/>
        <end position="51"/>
    </location>
</feature>
<feature type="turn" evidence="10">
    <location>
        <begin position="54"/>
        <end position="56"/>
    </location>
</feature>
<feature type="strand" evidence="9">
    <location>
        <begin position="60"/>
        <end position="62"/>
    </location>
</feature>
<feature type="turn" evidence="12">
    <location>
        <begin position="64"/>
        <end position="66"/>
    </location>
</feature>
<feature type="helix" evidence="12">
    <location>
        <begin position="67"/>
        <end position="69"/>
    </location>
</feature>
<feature type="strand" evidence="12">
    <location>
        <begin position="70"/>
        <end position="75"/>
    </location>
</feature>
<feature type="helix" evidence="12">
    <location>
        <begin position="76"/>
        <end position="78"/>
    </location>
</feature>
<feature type="strand" evidence="12">
    <location>
        <begin position="80"/>
        <end position="85"/>
    </location>
</feature>
<feature type="helix" evidence="12">
    <location>
        <begin position="90"/>
        <end position="92"/>
    </location>
</feature>
<feature type="strand" evidence="12">
    <location>
        <begin position="94"/>
        <end position="103"/>
    </location>
</feature>
<feature type="helix" evidence="9">
    <location>
        <begin position="104"/>
        <end position="106"/>
    </location>
</feature>
<feature type="strand" evidence="12">
    <location>
        <begin position="108"/>
        <end position="110"/>
    </location>
</feature>
<feature type="strand" evidence="12">
    <location>
        <begin position="114"/>
        <end position="118"/>
    </location>
</feature>
<feature type="strand" evidence="12">
    <location>
        <begin position="127"/>
        <end position="131"/>
    </location>
</feature>
<feature type="helix" evidence="12">
    <location>
        <begin position="135"/>
        <end position="138"/>
    </location>
</feature>
<feature type="strand" evidence="12">
    <location>
        <begin position="139"/>
        <end position="155"/>
    </location>
</feature>
<feature type="strand" evidence="12">
    <location>
        <begin position="158"/>
        <end position="161"/>
    </location>
</feature>
<feature type="helix" evidence="12">
    <location>
        <begin position="162"/>
        <end position="164"/>
    </location>
</feature>
<feature type="strand" evidence="12">
    <location>
        <begin position="170"/>
        <end position="172"/>
    </location>
</feature>
<feature type="strand" evidence="12">
    <location>
        <begin position="176"/>
        <end position="178"/>
    </location>
</feature>
<feature type="strand" evidence="12">
    <location>
        <begin position="181"/>
        <end position="191"/>
    </location>
</feature>
<feature type="turn" evidence="12">
    <location>
        <begin position="192"/>
        <end position="197"/>
    </location>
</feature>
<feature type="strand" evidence="12">
    <location>
        <begin position="201"/>
        <end position="206"/>
    </location>
</feature>
<feature type="helix" evidence="12">
    <location>
        <begin position="207"/>
        <end position="209"/>
    </location>
</feature>
<feature type="strand" evidence="12">
    <location>
        <begin position="211"/>
        <end position="216"/>
    </location>
</feature>
<organism>
    <name type="scientific">Mus musculus</name>
    <name type="common">Mouse</name>
    <dbReference type="NCBI Taxonomy" id="10090"/>
    <lineage>
        <taxon>Eukaryota</taxon>
        <taxon>Metazoa</taxon>
        <taxon>Chordata</taxon>
        <taxon>Craniata</taxon>
        <taxon>Vertebrata</taxon>
        <taxon>Euteleostomi</taxon>
        <taxon>Mammalia</taxon>
        <taxon>Eutheria</taxon>
        <taxon>Euarchontoglires</taxon>
        <taxon>Glires</taxon>
        <taxon>Rodentia</taxon>
        <taxon>Myomorpha</taxon>
        <taxon>Muroidea</taxon>
        <taxon>Muridae</taxon>
        <taxon>Murinae</taxon>
        <taxon>Mus</taxon>
        <taxon>Mus</taxon>
    </lineage>
</organism>
<name>HVM63_MOUSE</name>
<reference evidence="7 8" key="1">
    <citation type="journal article" date="2002" name="J. Virol.">
        <title>Antibody epitopes on the neuraminidase of a recent H3N2 influenza virus (A/Memphis/31/98).</title>
        <authorList>
            <person name="Gulati U."/>
            <person name="Hwang C.C."/>
            <person name="Venkatramani L."/>
            <person name="Gulati S."/>
            <person name="Stray S.J."/>
            <person name="Lee J.T."/>
            <person name="Laver W.G."/>
            <person name="Bochkarev A."/>
            <person name="Zlotnick A."/>
            <person name="Air G.M."/>
        </authorList>
    </citation>
    <scope>PROTEIN SEQUENCE OF 1-19</scope>
    <scope>NUCLEOTIDE SEQUENCE [MRNA] OF 20-237</scope>
    <scope>FUNCTION</scope>
    <source>
        <strain evidence="8">BALB/cJ</strain>
    </source>
</reference>
<proteinExistence type="evidence at protein level"/>
<protein>
    <recommendedName>
        <fullName>Ig heavy chain Mem5</fullName>
    </recommendedName>
</protein>
<sequence>EVKLVESGGGLVQPGGSLSLSCATSGFTFIDYYMSWFRQPPGKALEWLGLIRNKGNGYTMEYSASLKGRFTISRDNSQSIVYLHMNTLTAEDSATYYCARVDYGTNYDYWGQGTTLTVSSAKTTAPSVYPLAPVCGDTTGSSVTLGCLVKGYFPEPVTLTWNSGSLSSGVHTFPAVLQSDLYTLSSSVTVTSSTWPSQSITCNVAHPASSTKVDKKIEPRGPTIKPCPPCKCPAPNS</sequence>
<keyword id="KW-0002">3D-structure</keyword>
<keyword id="KW-1064">Adaptive immunity</keyword>
<keyword id="KW-0903">Direct protein sequencing</keyword>
<keyword id="KW-1015">Disulfide bond</keyword>
<keyword id="KW-0391">Immunity</keyword>
<keyword id="KW-1280">Immunoglobulin</keyword>
<keyword id="KW-1185">Reference proteome</keyword>
<keyword id="KW-0677">Repeat</keyword>
<keyword id="KW-0964">Secreted</keyword>
<accession>P84751</accession>
<comment type="function">
    <text evidence="5">Anti-influenza H3N2 neuraminidase antibody.</text>
</comment>
<comment type="subcellular location">
    <subcellularLocation>
        <location>Secreted</location>
    </subcellularLocation>
</comment>
<evidence type="ECO:0000250" key="1">
    <source>
        <dbReference type="UniProtKB" id="P01783"/>
    </source>
</evidence>
<evidence type="ECO:0000250" key="2">
    <source>
        <dbReference type="UniProtKB" id="P01863"/>
    </source>
</evidence>
<evidence type="ECO:0000255" key="3"/>
<evidence type="ECO:0000255" key="4">
    <source>
        <dbReference type="PROSITE-ProRule" id="PRU00114"/>
    </source>
</evidence>
<evidence type="ECO:0000269" key="5">
    <source>
    </source>
</evidence>
<evidence type="ECO:0000303" key="6">
    <source>
    </source>
</evidence>
<evidence type="ECO:0000305" key="7"/>
<evidence type="ECO:0000312" key="8">
    <source>
        <dbReference type="EMBL" id="ABB81885.1"/>
    </source>
</evidence>
<evidence type="ECO:0007829" key="9">
    <source>
        <dbReference type="PDB" id="1ZAN"/>
    </source>
</evidence>
<evidence type="ECO:0007829" key="10">
    <source>
        <dbReference type="PDB" id="2ADF"/>
    </source>
</evidence>
<evidence type="ECO:0007829" key="11">
    <source>
        <dbReference type="PDB" id="2G2R"/>
    </source>
</evidence>
<evidence type="ECO:0007829" key="12">
    <source>
        <dbReference type="PDB" id="3BKJ"/>
    </source>
</evidence>